<sequence length="432" mass="45588">MAPGREGELDRDFRVLMSLAHGFMVSQVLFAALDLGIFDLAAQGPVAAEAVAQTGGWSPRGTQLLMDACTRLGLLRGAGDGSYTNSALSSTFLVSGSPQSQRCMLLYLAGTTYGCWAHLAAGVREGRNQYSRAVGISAEDPFSAIYRSEPERLLFMRGLQETWSLCGGRVLTAFDLSRFRVICDLGGGSGALAQEAARLYPGSSVCVFDLPDVIAAARTHFLSPGARPSVRFVAGDFFRSRLPRADLFILARVLHDWADGACVELLGRLHRACRPGGALLLVEAVLAKGGAGPLRSLLLSLNMMLQAEGWERQASDYRNLATRAGFPRLQLRRPGGPYHAMLARRGPRPGIITGVGSNTTGTGSFVTGIRRDVPGARSDAAGTGSGTGNTGSGIMLQGETLESEVSAPQAGSDVGGAGNEPRSGTLKQGDWK</sequence>
<keyword id="KW-0443">Lipid metabolism</keyword>
<keyword id="KW-0471">Melatonin biosynthesis</keyword>
<keyword id="KW-0489">Methyltransferase</keyword>
<keyword id="KW-1185">Reference proteome</keyword>
<keyword id="KW-0949">S-adenosyl-L-methionine</keyword>
<keyword id="KW-0808">Transferase</keyword>
<gene>
    <name type="primary">Asmt</name>
    <name type="synonym">Hiomt</name>
</gene>
<comment type="function">
    <text evidence="5">Catalyzes the transfer of a methyl group onto N-acetylserotonin, producing melatonin (N-acetyl-5-methoxytryptamine).</text>
</comment>
<comment type="catalytic activity">
    <reaction evidence="5">
        <text>N-acetylserotonin + S-adenosyl-L-methionine = melatonin + S-adenosyl-L-homocysteine + H(+)</text>
        <dbReference type="Rhea" id="RHEA:15573"/>
        <dbReference type="ChEBI" id="CHEBI:15378"/>
        <dbReference type="ChEBI" id="CHEBI:16796"/>
        <dbReference type="ChEBI" id="CHEBI:17697"/>
        <dbReference type="ChEBI" id="CHEBI:57856"/>
        <dbReference type="ChEBI" id="CHEBI:59789"/>
        <dbReference type="EC" id="2.1.1.4"/>
    </reaction>
    <physiologicalReaction direction="left-to-right" evidence="7">
        <dbReference type="Rhea" id="RHEA:15574"/>
    </physiologicalReaction>
</comment>
<comment type="pathway">
    <text evidence="7">Aromatic compound metabolism; melatonin biosynthesis; melatonin from serotonin: step 1/2.</text>
</comment>
<comment type="subunit">
    <text evidence="1">Homodimer.</text>
</comment>
<comment type="tissue specificity">
    <text evidence="4 5">Expressed predominantly in the pineal gland (at protein level). Very low expression, if any, in the retina.</text>
</comment>
<comment type="induction">
    <text evidence="5">Exhibits very slight night/day variation, if any.</text>
</comment>
<comment type="miscellaneous">
    <text>Pineal melatonin synthesis is severely compromised in most inbred strains. In many inbred strains, genetic defects in ASMT have been identified. Melatonin production may have an impact on gonadal development, testis development being significantly promoted in melatonin-deficient C57BL/6J x Mus musculus molossinus animals.</text>
</comment>
<comment type="similarity">
    <text evidence="2">Belongs to the class I-like SAM-binding methyltransferase superfamily. Cation-independent O-methyltransferase family.</text>
</comment>
<comment type="sequence caution" evidence="6">
    <conflict type="frameshift">
        <sequence resource="EMBL-CDS" id="AAB61243"/>
    </conflict>
</comment>
<feature type="chain" id="PRO_0000414796" description="Acetylserotonin O-methyltransferase">
    <location>
        <begin position="1"/>
        <end position="432"/>
    </location>
</feature>
<feature type="region of interest" description="Disordered" evidence="3">
    <location>
        <begin position="373"/>
        <end position="432"/>
    </location>
</feature>
<feature type="active site" description="Proton donor/acceptor" evidence="1">
    <location>
        <position position="255"/>
    </location>
</feature>
<feature type="binding site" evidence="2">
    <location>
        <position position="146"/>
    </location>
    <ligand>
        <name>S-adenosyl-L-methionine</name>
        <dbReference type="ChEBI" id="CHEBI:59789"/>
    </ligand>
</feature>
<feature type="binding site" evidence="2">
    <location>
        <position position="163"/>
    </location>
    <ligand>
        <name>S-adenosyl-L-methionine</name>
        <dbReference type="ChEBI" id="CHEBI:59789"/>
    </ligand>
</feature>
<feature type="binding site" evidence="2">
    <location>
        <position position="209"/>
    </location>
    <ligand>
        <name>S-adenosyl-L-methionine</name>
        <dbReference type="ChEBI" id="CHEBI:59789"/>
    </ligand>
</feature>
<feature type="binding site" evidence="2">
    <location>
        <begin position="235"/>
        <end position="237"/>
    </location>
    <ligand>
        <name>S-adenosyl-L-methionine</name>
        <dbReference type="ChEBI" id="CHEBI:59789"/>
    </ligand>
</feature>
<feature type="binding site" evidence="2">
    <location>
        <position position="252"/>
    </location>
    <ligand>
        <name>S-adenosyl-L-methionine</name>
        <dbReference type="ChEBI" id="CHEBI:59789"/>
    </ligand>
</feature>
<feature type="binding site" evidence="1">
    <location>
        <position position="256"/>
    </location>
    <ligand>
        <name>substrate</name>
    </ligand>
</feature>
<feature type="binding site" evidence="1">
    <location>
        <position position="302"/>
    </location>
    <ligand>
        <name>substrate</name>
    </ligand>
</feature>
<feature type="binding site" evidence="1">
    <location>
        <position position="306"/>
    </location>
    <ligand>
        <name>substrate</name>
    </ligand>
</feature>
<organism>
    <name type="scientific">Rattus norvegicus</name>
    <name type="common">Rat</name>
    <dbReference type="NCBI Taxonomy" id="10116"/>
    <lineage>
        <taxon>Eukaryota</taxon>
        <taxon>Metazoa</taxon>
        <taxon>Chordata</taxon>
        <taxon>Craniata</taxon>
        <taxon>Vertebrata</taxon>
        <taxon>Euteleostomi</taxon>
        <taxon>Mammalia</taxon>
        <taxon>Eutheria</taxon>
        <taxon>Euarchontoglires</taxon>
        <taxon>Glires</taxon>
        <taxon>Rodentia</taxon>
        <taxon>Myomorpha</taxon>
        <taxon>Muroidea</taxon>
        <taxon>Muridae</taxon>
        <taxon>Murinae</taxon>
        <taxon>Rattus</taxon>
    </lineage>
</organism>
<proteinExistence type="evidence at protein level"/>
<dbReference type="EC" id="2.1.1.4" evidence="5"/>
<dbReference type="EMBL" id="L78306">
    <property type="protein sequence ID" value="AAB61243.1"/>
    <property type="status" value="ALT_FRAME"/>
    <property type="molecule type" value="mRNA"/>
</dbReference>
<dbReference type="EMBL" id="EU741665">
    <property type="protein sequence ID" value="ACD87748.1"/>
    <property type="molecule type" value="mRNA"/>
</dbReference>
<dbReference type="EMBL" id="CH474012">
    <property type="protein sequence ID" value="EDL89812.1"/>
    <property type="molecule type" value="Genomic_DNA"/>
</dbReference>
<dbReference type="RefSeq" id="NP_653360.2">
    <property type="nucleotide sequence ID" value="NM_144759.2"/>
</dbReference>
<dbReference type="SMR" id="B3GSH5"/>
<dbReference type="STRING" id="10116.ENSRNOP00000001791"/>
<dbReference type="PaxDb" id="10116-ENSRNOP00000001791"/>
<dbReference type="Ensembl" id="ENSRNOT00000001791.7">
    <property type="protein sequence ID" value="ENSRNOP00000001791.5"/>
    <property type="gene ID" value="ENSRNOG00000001324.7"/>
</dbReference>
<dbReference type="GeneID" id="246281"/>
<dbReference type="KEGG" id="rno:246281"/>
<dbReference type="UCSC" id="RGD:708472">
    <property type="organism name" value="rat"/>
</dbReference>
<dbReference type="AGR" id="RGD:708472"/>
<dbReference type="CTD" id="438"/>
<dbReference type="RGD" id="708472">
    <property type="gene designation" value="Asmt"/>
</dbReference>
<dbReference type="eggNOG" id="KOG3178">
    <property type="taxonomic scope" value="Eukaryota"/>
</dbReference>
<dbReference type="GeneTree" id="ENSGT00940000161561"/>
<dbReference type="HOGENOM" id="CLU_005533_4_2_1"/>
<dbReference type="InParanoid" id="B3GSH5"/>
<dbReference type="OMA" id="FWPYVFG"/>
<dbReference type="OrthoDB" id="1606438at2759"/>
<dbReference type="BRENDA" id="2.1.1.4">
    <property type="organism ID" value="5301"/>
</dbReference>
<dbReference type="Reactome" id="R-RNO-209931">
    <property type="pathway name" value="Serotonin and melatonin biosynthesis"/>
</dbReference>
<dbReference type="UniPathway" id="UPA00837">
    <property type="reaction ID" value="UER00815"/>
</dbReference>
<dbReference type="PRO" id="PR:B3GSH5"/>
<dbReference type="Proteomes" id="UP000002494">
    <property type="component" value="Chromosome 12"/>
</dbReference>
<dbReference type="Proteomes" id="UP000234681">
    <property type="component" value="Chromosome 12"/>
</dbReference>
<dbReference type="Bgee" id="ENSRNOG00000001324">
    <property type="expression patterns" value="Expressed in cerebellum and 5 other cell types or tissues"/>
</dbReference>
<dbReference type="GO" id="GO:0017096">
    <property type="term" value="F:acetylserotonin O-methyltransferase activity"/>
    <property type="evidence" value="ECO:0000314"/>
    <property type="project" value="RGD"/>
</dbReference>
<dbReference type="GO" id="GO:0042802">
    <property type="term" value="F:identical protein binding"/>
    <property type="evidence" value="ECO:0000266"/>
    <property type="project" value="RGD"/>
</dbReference>
<dbReference type="GO" id="GO:0042803">
    <property type="term" value="F:protein homodimerization activity"/>
    <property type="evidence" value="ECO:0000266"/>
    <property type="project" value="RGD"/>
</dbReference>
<dbReference type="GO" id="GO:0008757">
    <property type="term" value="F:S-adenosylmethionine-dependent methyltransferase activity"/>
    <property type="evidence" value="ECO:0000314"/>
    <property type="project" value="RGD"/>
</dbReference>
<dbReference type="GO" id="GO:0006629">
    <property type="term" value="P:lipid metabolic process"/>
    <property type="evidence" value="ECO:0007669"/>
    <property type="project" value="UniProtKB-KW"/>
</dbReference>
<dbReference type="GO" id="GO:0008584">
    <property type="term" value="P:male gonad development"/>
    <property type="evidence" value="ECO:0000266"/>
    <property type="project" value="RGD"/>
</dbReference>
<dbReference type="GO" id="GO:0030187">
    <property type="term" value="P:melatonin biosynthetic process"/>
    <property type="evidence" value="ECO:0000314"/>
    <property type="project" value="RGD"/>
</dbReference>
<dbReference type="GO" id="GO:0032259">
    <property type="term" value="P:methylation"/>
    <property type="evidence" value="ECO:0000318"/>
    <property type="project" value="GO_Central"/>
</dbReference>
<dbReference type="GO" id="GO:2000019">
    <property type="term" value="P:negative regulation of male gonad development"/>
    <property type="evidence" value="ECO:0000266"/>
    <property type="project" value="RGD"/>
</dbReference>
<dbReference type="CDD" id="cd02440">
    <property type="entry name" value="AdoMet_MTases"/>
    <property type="match status" value="1"/>
</dbReference>
<dbReference type="FunFam" id="1.10.10.10:FF:000358">
    <property type="entry name" value="Acetylserotonin O-methyltransferase"/>
    <property type="match status" value="1"/>
</dbReference>
<dbReference type="FunFam" id="3.40.50.150:FF:000146">
    <property type="entry name" value="Acetylserotonin O-methyltransferase"/>
    <property type="match status" value="1"/>
</dbReference>
<dbReference type="Gene3D" id="3.40.50.150">
    <property type="entry name" value="Vaccinia Virus protein VP39"/>
    <property type="match status" value="1"/>
</dbReference>
<dbReference type="Gene3D" id="1.10.10.10">
    <property type="entry name" value="Winged helix-like DNA-binding domain superfamily/Winged helix DNA-binding domain"/>
    <property type="match status" value="1"/>
</dbReference>
<dbReference type="InterPro" id="IPR016461">
    <property type="entry name" value="COMT-like"/>
</dbReference>
<dbReference type="InterPro" id="IPR001077">
    <property type="entry name" value="O_MeTrfase_dom"/>
</dbReference>
<dbReference type="InterPro" id="IPR012967">
    <property type="entry name" value="Plant_O-MeTrfase_dimerisation"/>
</dbReference>
<dbReference type="InterPro" id="IPR029063">
    <property type="entry name" value="SAM-dependent_MTases_sf"/>
</dbReference>
<dbReference type="InterPro" id="IPR036388">
    <property type="entry name" value="WH-like_DNA-bd_sf"/>
</dbReference>
<dbReference type="InterPro" id="IPR036390">
    <property type="entry name" value="WH_DNA-bd_sf"/>
</dbReference>
<dbReference type="PANTHER" id="PTHR43712:SF2">
    <property type="entry name" value="O-METHYLTRANSFERASE CICE"/>
    <property type="match status" value="1"/>
</dbReference>
<dbReference type="PANTHER" id="PTHR43712">
    <property type="entry name" value="PUTATIVE (AFU_ORTHOLOGUE AFUA_4G14580)-RELATED"/>
    <property type="match status" value="1"/>
</dbReference>
<dbReference type="Pfam" id="PF08100">
    <property type="entry name" value="Dimerisation"/>
    <property type="match status" value="1"/>
</dbReference>
<dbReference type="Pfam" id="PF00891">
    <property type="entry name" value="Methyltransf_2"/>
    <property type="match status" value="1"/>
</dbReference>
<dbReference type="SUPFAM" id="SSF53335">
    <property type="entry name" value="S-adenosyl-L-methionine-dependent methyltransferases"/>
    <property type="match status" value="1"/>
</dbReference>
<dbReference type="SUPFAM" id="SSF46785">
    <property type="entry name" value="Winged helix' DNA-binding domain"/>
    <property type="match status" value="1"/>
</dbReference>
<dbReference type="PROSITE" id="PS51683">
    <property type="entry name" value="SAM_OMT_II"/>
    <property type="match status" value="1"/>
</dbReference>
<protein>
    <recommendedName>
        <fullName>Acetylserotonin O-methyltransferase</fullName>
        <ecNumber evidence="5">2.1.1.4</ecNumber>
    </recommendedName>
    <alternativeName>
        <fullName>Hydroxyindole O-methyltransferase</fullName>
    </alternativeName>
</protein>
<reference key="1">
    <citation type="journal article" date="1996" name="Brain Res.">
        <title>Circadian regulation of hydroxyindole-O-methyltransferase mRNA levels in rat pineal and retina.</title>
        <authorList>
            <person name="Gauer F."/>
            <person name="Craft C.M."/>
        </authorList>
    </citation>
    <scope>NUCLEOTIDE SEQUENCE [MRNA]</scope>
    <scope>FUNCTION</scope>
    <scope>CATALYTIC ACTIVITY</scope>
    <scope>PATHWAY</scope>
    <scope>INDUCTION</scope>
    <scope>TISSUE SPECIFICITY</scope>
    <source>
        <tissue>Pineal gland</tissue>
    </source>
</reference>
<reference key="2">
    <citation type="submission" date="2008-05" db="EMBL/GenBank/DDBJ databases">
        <title>Significant sequence revision of rat acetylserotonin O-methyltransferase mRNA increases length of predicted protein.</title>
        <authorList>
            <person name="Amaral F.G."/>
            <person name="Coon S.L."/>
            <person name="Klein D.C."/>
        </authorList>
    </citation>
    <scope>NUCLEOTIDE SEQUENCE [MRNA]</scope>
    <source>
        <strain>Sprague-Dawley</strain>
    </source>
</reference>
<reference key="3">
    <citation type="submission" date="2005-07" db="EMBL/GenBank/DDBJ databases">
        <authorList>
            <person name="Mural R.J."/>
            <person name="Adams M.D."/>
            <person name="Myers E.W."/>
            <person name="Smith H.O."/>
            <person name="Venter J.C."/>
        </authorList>
    </citation>
    <scope>NUCLEOTIDE SEQUENCE [LARGE SCALE GENOMIC DNA]</scope>
</reference>
<reference key="4">
    <citation type="journal article" date="1995" name="Brain Res.">
        <title>Human hydroxyindole-O-methyltransferase in pineal gland, retina and Y79 retinoblastoma cells.</title>
        <authorList>
            <person name="Bernard M."/>
            <person name="Donohue S.J."/>
            <person name="Klein D.C."/>
        </authorList>
    </citation>
    <scope>TISSUE SPECIFICITY</scope>
</reference>
<name>ASMT_RAT</name>
<evidence type="ECO:0000250" key="1"/>
<evidence type="ECO:0000255" key="2">
    <source>
        <dbReference type="PROSITE-ProRule" id="PRU01020"/>
    </source>
</evidence>
<evidence type="ECO:0000256" key="3">
    <source>
        <dbReference type="SAM" id="MobiDB-lite"/>
    </source>
</evidence>
<evidence type="ECO:0000269" key="4">
    <source>
    </source>
</evidence>
<evidence type="ECO:0000269" key="5">
    <source>
    </source>
</evidence>
<evidence type="ECO:0000305" key="6"/>
<evidence type="ECO:0000305" key="7">
    <source>
    </source>
</evidence>
<accession>B3GSH5</accession>
<accession>O09179</accession>